<proteinExistence type="inferred from homology"/>
<evidence type="ECO:0000250" key="1">
    <source>
        <dbReference type="UniProtKB" id="P0ADP5"/>
    </source>
</evidence>
<evidence type="ECO:0000255" key="2"/>
<evidence type="ECO:0000305" key="3"/>
<reference key="1">
    <citation type="journal article" date="2001" name="Nature">
        <title>Complete genome sequence of Salmonella enterica serovar Typhimurium LT2.</title>
        <authorList>
            <person name="McClelland M."/>
            <person name="Sanderson K.E."/>
            <person name="Spieth J."/>
            <person name="Clifton S.W."/>
            <person name="Latreille P."/>
            <person name="Courtney L."/>
            <person name="Porwollik S."/>
            <person name="Ali J."/>
            <person name="Dante M."/>
            <person name="Du F."/>
            <person name="Hou S."/>
            <person name="Layman D."/>
            <person name="Leonard S."/>
            <person name="Nguyen C."/>
            <person name="Scott K."/>
            <person name="Holmes A."/>
            <person name="Grewal N."/>
            <person name="Mulvaney E."/>
            <person name="Ryan E."/>
            <person name="Sun H."/>
            <person name="Florea L."/>
            <person name="Miller W."/>
            <person name="Stoneking T."/>
            <person name="Nhan M."/>
            <person name="Waterston R."/>
            <person name="Wilson R.K."/>
        </authorList>
    </citation>
    <scope>NUCLEOTIDE SEQUENCE [LARGE SCALE GENOMIC DNA]</scope>
    <source>
        <strain>LT2 / SGSC1412 / ATCC 700720</strain>
    </source>
</reference>
<keyword id="KW-0997">Cell inner membrane</keyword>
<keyword id="KW-1003">Cell membrane</keyword>
<keyword id="KW-0472">Membrane</keyword>
<keyword id="KW-1185">Reference proteome</keyword>
<keyword id="KW-0677">Repeat</keyword>
<keyword id="KW-0812">Transmembrane</keyword>
<keyword id="KW-1133">Transmembrane helix</keyword>
<keyword id="KW-0813">Transport</keyword>
<organism>
    <name type="scientific">Salmonella typhimurium (strain LT2 / SGSC1412 / ATCC 700720)</name>
    <dbReference type="NCBI Taxonomy" id="99287"/>
    <lineage>
        <taxon>Bacteria</taxon>
        <taxon>Pseudomonadati</taxon>
        <taxon>Pseudomonadota</taxon>
        <taxon>Gammaproteobacteria</taxon>
        <taxon>Enterobacterales</taxon>
        <taxon>Enterobacteriaceae</taxon>
        <taxon>Salmonella</taxon>
    </lineage>
</organism>
<dbReference type="EMBL" id="AF233324">
    <property type="protein sequence ID" value="AAF33429.1"/>
    <property type="molecule type" value="Genomic_DNA"/>
</dbReference>
<dbReference type="EMBL" id="AE006468">
    <property type="protein sequence ID" value="AAL22807.1"/>
    <property type="molecule type" value="Genomic_DNA"/>
</dbReference>
<dbReference type="RefSeq" id="NP_462848.1">
    <property type="nucleotide sequence ID" value="NC_003197.2"/>
</dbReference>
<dbReference type="RefSeq" id="WP_001196257.1">
    <property type="nucleotide sequence ID" value="NC_003197.2"/>
</dbReference>
<dbReference type="SMR" id="P0A1U2"/>
<dbReference type="STRING" id="99287.STM3963"/>
<dbReference type="PaxDb" id="99287-STM3963"/>
<dbReference type="GeneID" id="1255489"/>
<dbReference type="KEGG" id="stm:STM3963"/>
<dbReference type="PATRIC" id="fig|99287.12.peg.4181"/>
<dbReference type="HOGENOM" id="CLU_085269_0_0_6"/>
<dbReference type="OMA" id="HTAFSWF"/>
<dbReference type="PhylomeDB" id="P0A1U2"/>
<dbReference type="BioCyc" id="SENT99287:STM3963-MONOMER"/>
<dbReference type="Proteomes" id="UP000001014">
    <property type="component" value="Chromosome"/>
</dbReference>
<dbReference type="GO" id="GO:0016020">
    <property type="term" value="C:membrane"/>
    <property type="evidence" value="ECO:0000318"/>
    <property type="project" value="GO_Central"/>
</dbReference>
<dbReference type="GO" id="GO:0005886">
    <property type="term" value="C:plasma membrane"/>
    <property type="evidence" value="ECO:0007669"/>
    <property type="project" value="UniProtKB-SubCell"/>
</dbReference>
<dbReference type="InterPro" id="IPR004779">
    <property type="entry name" value="CO/AA/NH_transpt"/>
</dbReference>
<dbReference type="InterPro" id="IPR051258">
    <property type="entry name" value="Diverse_Substrate_Transporter"/>
</dbReference>
<dbReference type="InterPro" id="IPR000620">
    <property type="entry name" value="EamA_dom"/>
</dbReference>
<dbReference type="NCBIfam" id="TIGR00950">
    <property type="entry name" value="2A78"/>
    <property type="match status" value="1"/>
</dbReference>
<dbReference type="PANTHER" id="PTHR42920:SF5">
    <property type="entry name" value="EAMA DOMAIN-CONTAINING PROTEIN"/>
    <property type="match status" value="1"/>
</dbReference>
<dbReference type="PANTHER" id="PTHR42920">
    <property type="entry name" value="OS03G0707200 PROTEIN-RELATED"/>
    <property type="match status" value="1"/>
</dbReference>
<dbReference type="Pfam" id="PF00892">
    <property type="entry name" value="EamA"/>
    <property type="match status" value="2"/>
</dbReference>
<dbReference type="SUPFAM" id="SSF103481">
    <property type="entry name" value="Multidrug resistance efflux transporter EmrE"/>
    <property type="match status" value="2"/>
</dbReference>
<comment type="function">
    <text evidence="1">Uptake of biotin.</text>
</comment>
<comment type="catalytic activity">
    <reaction evidence="1">
        <text>biotin(in) = biotin(out)</text>
        <dbReference type="Rhea" id="RHEA:28458"/>
        <dbReference type="ChEBI" id="CHEBI:57586"/>
    </reaction>
    <physiologicalReaction direction="right-to-left" evidence="1">
        <dbReference type="Rhea" id="RHEA:28460"/>
    </physiologicalReaction>
</comment>
<comment type="subcellular location">
    <subcellularLocation>
        <location evidence="1">Cell inner membrane</location>
        <topology evidence="2">Multi-pass membrane protein</topology>
    </subcellularLocation>
</comment>
<comment type="similarity">
    <text evidence="3">Belongs to the drug/metabolite transporter (DMT) superfamily. 10 TMS drug/metabolite exporter (DME) (TC 2.A.7.3) family.</text>
</comment>
<protein>
    <recommendedName>
        <fullName evidence="1">Biotin transporter</fullName>
    </recommendedName>
</protein>
<feature type="chain" id="PRO_0000169666" description="Biotin transporter">
    <location>
        <begin position="1"/>
        <end position="299"/>
    </location>
</feature>
<feature type="transmembrane region" description="Helical" evidence="2">
    <location>
        <begin position="2"/>
        <end position="22"/>
    </location>
</feature>
<feature type="transmembrane region" description="Helical" evidence="2">
    <location>
        <begin position="26"/>
        <end position="46"/>
    </location>
</feature>
<feature type="transmembrane region" description="Helical" evidence="2">
    <location>
        <begin position="56"/>
        <end position="76"/>
    </location>
</feature>
<feature type="transmembrane region" description="Helical" evidence="2">
    <location>
        <begin position="81"/>
        <end position="101"/>
    </location>
</feature>
<feature type="transmembrane region" description="Helical" evidence="2">
    <location>
        <begin position="110"/>
        <end position="130"/>
    </location>
</feature>
<feature type="transmembrane region" description="Helical" evidence="2">
    <location>
        <begin position="137"/>
        <end position="157"/>
    </location>
</feature>
<feature type="transmembrane region" description="Helical" evidence="2">
    <location>
        <begin position="172"/>
        <end position="192"/>
    </location>
</feature>
<feature type="transmembrane region" description="Helical" evidence="2">
    <location>
        <begin position="202"/>
        <end position="222"/>
    </location>
</feature>
<feature type="transmembrane region" description="Helical" evidence="2">
    <location>
        <begin position="233"/>
        <end position="253"/>
    </location>
</feature>
<feature type="transmembrane region" description="Helical" evidence="2">
    <location>
        <begin position="256"/>
        <end position="276"/>
    </location>
</feature>
<feature type="domain" description="EamA 1" evidence="2">
    <location>
        <begin position="3"/>
        <end position="128"/>
    </location>
</feature>
<feature type="domain" description="EamA 2" evidence="2">
    <location>
        <begin position="139"/>
        <end position="274"/>
    </location>
</feature>
<name>BIOP_SALTY</name>
<gene>
    <name evidence="1" type="primary">bioP</name>
    <name type="synonym">yigM</name>
    <name type="ordered locus">STM3963</name>
    <name type="ORF">STMD1.27</name>
</gene>
<accession>P0A1U2</accession>
<accession>Q9L6N3</accession>
<sequence length="299" mass="33585">MALLIITTILWAFSFSLFGEYLAGHVDSYFAVLIRVGLAALVFLPFLRTRGHNLKTISLYMLVGAMQLGIMYMLSFHAYLYLTVSELLLFTVLTPLYITLIYDVMSQRRLRWGYAFSALLAVIGAGIIRYDRVTDHFWVGLLLVQLSNISFAIGMVGYKRLMETRPMPQHNAFAWFYLGAFLVAAVAWSLLGNAQKLPETTLQWSILVFLGVVASGIGYFMWNYGATQVDAGTLGIMNNMHVPAGLLVNLAIWHQQPHWPSFITGAAVILASLWVHRKWVAPRSAQTADDRRRDPASSE</sequence>